<protein>
    <recommendedName>
        <fullName>Phospholipase A2 'basic'</fullName>
        <shortName>svPLA2</shortName>
        <ecNumber>3.1.1.4</ecNumber>
    </recommendedName>
    <alternativeName>
        <fullName>Phosphatidylcholine 2-acylhydrolase</fullName>
    </alternativeName>
    <alternativeName>
        <fullName>Phospholipase A2 isozyme III/IV</fullName>
        <shortName>CM-III/CM-IV</shortName>
    </alternativeName>
</protein>
<keyword id="KW-1203">Blood coagulation cascade inhibiting toxin</keyword>
<keyword id="KW-0106">Calcium</keyword>
<keyword id="KW-0903">Direct protein sequencing</keyword>
<keyword id="KW-1015">Disulfide bond</keyword>
<keyword id="KW-1199">Hemostasis impairing toxin</keyword>
<keyword id="KW-0378">Hydrolase</keyword>
<keyword id="KW-0442">Lipid degradation</keyword>
<keyword id="KW-0443">Lipid metabolism</keyword>
<keyword id="KW-0479">Metal-binding</keyword>
<keyword id="KW-0964">Secreted</keyword>
<keyword id="KW-0800">Toxin</keyword>
<sequence>NLYQFKNMIHCTVPSRPWWHFADYGCYCGRGGKGTPVDDLDRCCQVHDNCYEKAGKMGCWPYLTLYKYKCSQGKLTCSGGNSKCGAAVCNCDLVAANCFAGARYIDANYNINFKKRCQ</sequence>
<dbReference type="EC" id="3.1.1.4"/>
<dbReference type="SMR" id="P00605"/>
<dbReference type="GO" id="GO:0005576">
    <property type="term" value="C:extracellular region"/>
    <property type="evidence" value="ECO:0007669"/>
    <property type="project" value="UniProtKB-SubCell"/>
</dbReference>
<dbReference type="GO" id="GO:0005509">
    <property type="term" value="F:calcium ion binding"/>
    <property type="evidence" value="ECO:0007669"/>
    <property type="project" value="InterPro"/>
</dbReference>
<dbReference type="GO" id="GO:0047498">
    <property type="term" value="F:calcium-dependent phospholipase A2 activity"/>
    <property type="evidence" value="ECO:0007669"/>
    <property type="project" value="TreeGrafter"/>
</dbReference>
<dbReference type="GO" id="GO:0005543">
    <property type="term" value="F:phospholipid binding"/>
    <property type="evidence" value="ECO:0007669"/>
    <property type="project" value="TreeGrafter"/>
</dbReference>
<dbReference type="GO" id="GO:0090729">
    <property type="term" value="F:toxin activity"/>
    <property type="evidence" value="ECO:0007669"/>
    <property type="project" value="UniProtKB-KW"/>
</dbReference>
<dbReference type="GO" id="GO:0050482">
    <property type="term" value="P:arachidonate secretion"/>
    <property type="evidence" value="ECO:0007669"/>
    <property type="project" value="InterPro"/>
</dbReference>
<dbReference type="GO" id="GO:0016042">
    <property type="term" value="P:lipid catabolic process"/>
    <property type="evidence" value="ECO:0007669"/>
    <property type="project" value="UniProtKB-KW"/>
</dbReference>
<dbReference type="GO" id="GO:0006644">
    <property type="term" value="P:phospholipid metabolic process"/>
    <property type="evidence" value="ECO:0007669"/>
    <property type="project" value="InterPro"/>
</dbReference>
<dbReference type="CDD" id="cd00125">
    <property type="entry name" value="PLA2c"/>
    <property type="match status" value="1"/>
</dbReference>
<dbReference type="FunFam" id="1.20.90.10:FF:000007">
    <property type="entry name" value="Acidic phospholipase A2"/>
    <property type="match status" value="1"/>
</dbReference>
<dbReference type="Gene3D" id="1.20.90.10">
    <property type="entry name" value="Phospholipase A2 domain"/>
    <property type="match status" value="1"/>
</dbReference>
<dbReference type="InterPro" id="IPR001211">
    <property type="entry name" value="PLipase_A2"/>
</dbReference>
<dbReference type="InterPro" id="IPR033112">
    <property type="entry name" value="PLipase_A2_Asp_AS"/>
</dbReference>
<dbReference type="InterPro" id="IPR016090">
    <property type="entry name" value="PLipase_A2_dom"/>
</dbReference>
<dbReference type="InterPro" id="IPR036444">
    <property type="entry name" value="PLipase_A2_dom_sf"/>
</dbReference>
<dbReference type="InterPro" id="IPR033113">
    <property type="entry name" value="PLipase_A2_His_AS"/>
</dbReference>
<dbReference type="PANTHER" id="PTHR11716:SF106">
    <property type="entry name" value="PHOSPHOLIPASE A2 A2-ACTITOXIN-UCS2A-LIKE"/>
    <property type="match status" value="1"/>
</dbReference>
<dbReference type="PANTHER" id="PTHR11716">
    <property type="entry name" value="PHOSPHOLIPASE A2 FAMILY MEMBER"/>
    <property type="match status" value="1"/>
</dbReference>
<dbReference type="Pfam" id="PF00068">
    <property type="entry name" value="Phospholip_A2_1"/>
    <property type="match status" value="1"/>
</dbReference>
<dbReference type="PRINTS" id="PR00389">
    <property type="entry name" value="PHPHLIPASEA2"/>
</dbReference>
<dbReference type="SMART" id="SM00085">
    <property type="entry name" value="PA2c"/>
    <property type="match status" value="1"/>
</dbReference>
<dbReference type="SUPFAM" id="SSF48619">
    <property type="entry name" value="Phospholipase A2, PLA2"/>
    <property type="match status" value="1"/>
</dbReference>
<dbReference type="PROSITE" id="PS00119">
    <property type="entry name" value="PA2_ASP"/>
    <property type="match status" value="1"/>
</dbReference>
<dbReference type="PROSITE" id="PS00118">
    <property type="entry name" value="PA2_HIS"/>
    <property type="match status" value="1"/>
</dbReference>
<feature type="chain" id="PRO_0000161671" description="Phospholipase A2 'basic'">
    <location>
        <begin position="1"/>
        <end position="118"/>
    </location>
</feature>
<feature type="short sequence motif" description="Coagulation factor Xa binding motif">
    <location>
        <begin position="52"/>
        <end position="69"/>
    </location>
</feature>
<feature type="active site" evidence="1">
    <location>
        <position position="47"/>
    </location>
</feature>
<feature type="active site" evidence="1">
    <location>
        <position position="92"/>
    </location>
</feature>
<feature type="binding site" evidence="1">
    <location>
        <position position="27"/>
    </location>
    <ligand>
        <name>Ca(2+)</name>
        <dbReference type="ChEBI" id="CHEBI:29108"/>
    </ligand>
</feature>
<feature type="binding site" evidence="1">
    <location>
        <position position="29"/>
    </location>
    <ligand>
        <name>Ca(2+)</name>
        <dbReference type="ChEBI" id="CHEBI:29108"/>
    </ligand>
</feature>
<feature type="binding site" evidence="1">
    <location>
        <position position="31"/>
    </location>
    <ligand>
        <name>Ca(2+)</name>
        <dbReference type="ChEBI" id="CHEBI:29108"/>
    </ligand>
</feature>
<feature type="binding site" evidence="1">
    <location>
        <position position="48"/>
    </location>
    <ligand>
        <name>Ca(2+)</name>
        <dbReference type="ChEBI" id="CHEBI:29108"/>
    </ligand>
</feature>
<feature type="disulfide bond" evidence="1">
    <location>
        <begin position="11"/>
        <end position="70"/>
    </location>
</feature>
<feature type="disulfide bond" evidence="1">
    <location>
        <begin position="26"/>
        <end position="117"/>
    </location>
</feature>
<feature type="disulfide bond" evidence="1">
    <location>
        <begin position="28"/>
        <end position="44"/>
    </location>
</feature>
<feature type="disulfide bond" evidence="1">
    <location>
        <begin position="43"/>
        <end position="98"/>
    </location>
</feature>
<feature type="disulfide bond" evidence="1">
    <location>
        <begin position="50"/>
        <end position="91"/>
    </location>
</feature>
<feature type="disulfide bond" evidence="1">
    <location>
        <begin position="59"/>
        <end position="84"/>
    </location>
</feature>
<feature type="disulfide bond" evidence="1">
    <location>
        <begin position="77"/>
        <end position="89"/>
    </location>
</feature>
<reference key="1">
    <citation type="book" date="1975" name="Peptides: chemistry, structure and function">
        <title>Structure and function of snake venom toxins.</title>
        <editorList>
            <person name="Walter R."/>
            <person name="Meieihofer J."/>
        </editorList>
        <authorList>
            <person name="Eaker D."/>
        </authorList>
    </citation>
    <scope>PROTEIN SEQUENCE</scope>
    <source>
        <tissue>Venom</tissue>
    </source>
</reference>
<reference key="2">
    <citation type="journal article" date="1980" name="J. Biol. Chem.">
        <title>Isolation of anticoagulant proteins from cobra venom (Naja nigricollis). Identity with phospholipases A2.</title>
        <authorList>
            <person name="Evans H.J."/>
            <person name="Franson R."/>
            <person name="Qureshi G.D."/>
            <person name="Moo-Penn W.F."/>
        </authorList>
    </citation>
    <scope>PROTEIN SEQUENCE OF 1-25</scope>
    <source>
        <tissue>Venom</tissue>
    </source>
</reference>
<reference key="3">
    <citation type="journal article" date="1989" name="Thromb. Res.">
        <title>The inhibition of clotting complexes of the extrinsic coagulation cascade by the phospholipase A2 isoenzymes from Naja nigricollis venom.</title>
        <authorList>
            <person name="Stefansson S."/>
            <person name="Kini R.M."/>
            <person name="Evans H.J."/>
        </authorList>
    </citation>
    <scope>FUNCTION</scope>
</reference>
<reference key="4">
    <citation type="journal article" date="1990" name="Biochemistry">
        <title>The basic phospholipase A2 from Naja nigricollis venom inhibits the prothrombinase complex by a novel nonenzymatic mechanism.</title>
        <authorList>
            <person name="Stefansson S."/>
            <person name="Kini R.M."/>
            <person name="Evans H.J."/>
        </authorList>
    </citation>
    <scope>FUNCTION</scope>
</reference>
<reference key="5">
    <citation type="journal article" date="1995" name="Toxicon">
        <title>The role of enzymatic activity in inhibition of the extrinsic tenase complex by phospholipase A2 isoenzymes from Naja nigricollis venom.</title>
        <authorList>
            <person name="Kini R.M."/>
            <person name="Evans H.J."/>
        </authorList>
    </citation>
    <scope>FUNCTION</scope>
</reference>
<reference key="6">
    <citation type="journal article" date="1999" name="Arch. Biochem. Biophys.">
        <title>Targeting of venom phospholipases: the strongly anticoagulant phospholipase A(2) from Naja nigricollis venom binds to coagulation factor Xa to inhibit the prothrombinase complex.</title>
        <authorList>
            <person name="Kerns R.T."/>
            <person name="Kini R.M."/>
            <person name="Stefansson S."/>
            <person name="Evans H.J."/>
        </authorList>
    </citation>
    <scope>FUNCTION</scope>
</reference>
<reference key="7">
    <citation type="journal article" date="2005" name="Toxicon">
        <title>Structure-function relationships and mechanism of anticoagulant phospholipase A2 enzymes from snake venoms.</title>
        <authorList>
            <person name="Kini R.M."/>
        </authorList>
    </citation>
    <scope>REVIEW</scope>
    <scope>MOTIF</scope>
</reference>
<proteinExistence type="evidence at protein level"/>
<accession>P00605</accession>
<evidence type="ECO:0000250" key="1"/>
<evidence type="ECO:0000255" key="2">
    <source>
        <dbReference type="PROSITE-ProRule" id="PRU10035"/>
    </source>
</evidence>
<evidence type="ECO:0000255" key="3">
    <source>
        <dbReference type="PROSITE-ProRule" id="PRU10036"/>
    </source>
</evidence>
<evidence type="ECO:0000269" key="4">
    <source>
    </source>
</evidence>
<evidence type="ECO:0000269" key="5">
    <source>
    </source>
</evidence>
<evidence type="ECO:0000269" key="6">
    <source>
    </source>
</evidence>
<evidence type="ECO:0000269" key="7">
    <source>
    </source>
</evidence>
<evidence type="ECO:0000305" key="8"/>
<evidence type="ECO:0000305" key="9">
    <source>
    </source>
</evidence>
<organism>
    <name type="scientific">Naja nigricollis</name>
    <name type="common">Black-necked spitting cobra</name>
    <dbReference type="NCBI Taxonomy" id="8654"/>
    <lineage>
        <taxon>Eukaryota</taxon>
        <taxon>Metazoa</taxon>
        <taxon>Chordata</taxon>
        <taxon>Craniata</taxon>
        <taxon>Vertebrata</taxon>
        <taxon>Euteleostomi</taxon>
        <taxon>Lepidosauria</taxon>
        <taxon>Squamata</taxon>
        <taxon>Bifurcata</taxon>
        <taxon>Unidentata</taxon>
        <taxon>Episquamata</taxon>
        <taxon>Toxicofera</taxon>
        <taxon>Serpentes</taxon>
        <taxon>Colubroidea</taxon>
        <taxon>Elapidae</taxon>
        <taxon>Elapinae</taxon>
        <taxon>Naja</taxon>
    </lineage>
</organism>
<comment type="function">
    <text evidence="4 5 6 7">Snake venom phospholipase A2 (PLA2) that shows strong anticoagulant activity. Binds directly with the coagulation factor FXa (F10) and blocks the formation of the prothombinase complex. Acts by a nonenzymatic mechanism (PubMed:10462445). Also inhibits the complex composed of tissue factor (F3) and coagulation factor VIIa (F7) (TF-VIIa complex) by both enzymatic and nonenzymatic mechanisms (PubMed:8866616). PLA2 catalyzes the calcium-dependent hydrolysis of the 2-acyl groups in 3-sn-phosphoglycerides.</text>
</comment>
<comment type="catalytic activity">
    <reaction evidence="2 3">
        <text>a 1,2-diacyl-sn-glycero-3-phosphocholine + H2O = a 1-acyl-sn-glycero-3-phosphocholine + a fatty acid + H(+)</text>
        <dbReference type="Rhea" id="RHEA:15801"/>
        <dbReference type="ChEBI" id="CHEBI:15377"/>
        <dbReference type="ChEBI" id="CHEBI:15378"/>
        <dbReference type="ChEBI" id="CHEBI:28868"/>
        <dbReference type="ChEBI" id="CHEBI:57643"/>
        <dbReference type="ChEBI" id="CHEBI:58168"/>
        <dbReference type="EC" id="3.1.1.4"/>
    </reaction>
</comment>
<comment type="cofactor">
    <cofactor>
        <name>Ca(2+)</name>
        <dbReference type="ChEBI" id="CHEBI:29108"/>
    </cofactor>
    <text>Binds 1 Ca(2+) ion.</text>
</comment>
<comment type="subcellular location">
    <subcellularLocation>
        <location>Secreted</location>
    </subcellularLocation>
</comment>
<comment type="tissue specificity">
    <text>Expressed by the venom gland.</text>
</comment>
<comment type="toxic dose">
    <text>LD(50) is 0.63 mg/kg by intravenous injection.</text>
</comment>
<comment type="miscellaneous">
    <text evidence="9">Negative results: does not bind to coagulation factor FVa (F5) or prothrombin.</text>
</comment>
<comment type="similarity">
    <text evidence="8">Belongs to the phospholipase A2 family. Group I subfamily. D49 sub-subfamily.</text>
</comment>
<name>PA2B4_NAJNG</name>